<gene>
    <name type="ordered locus">Ping_3037</name>
</gene>
<feature type="chain" id="PRO_1000061627" description="UPF0246 protein Ping_3037">
    <location>
        <begin position="1"/>
        <end position="257"/>
    </location>
</feature>
<name>Y3037_PSYIN</name>
<proteinExistence type="inferred from homology"/>
<organism>
    <name type="scientific">Psychromonas ingrahamii (strain DSM 17664 / CCUG 51855 / 37)</name>
    <dbReference type="NCBI Taxonomy" id="357804"/>
    <lineage>
        <taxon>Bacteria</taxon>
        <taxon>Pseudomonadati</taxon>
        <taxon>Pseudomonadota</taxon>
        <taxon>Gammaproteobacteria</taxon>
        <taxon>Alteromonadales</taxon>
        <taxon>Psychromonadaceae</taxon>
        <taxon>Psychromonas</taxon>
    </lineage>
</organism>
<comment type="similarity">
    <text evidence="1">Belongs to the UPF0246 family.</text>
</comment>
<reference key="1">
    <citation type="journal article" date="2008" name="BMC Genomics">
        <title>Genomics of an extreme psychrophile, Psychromonas ingrahamii.</title>
        <authorList>
            <person name="Riley M."/>
            <person name="Staley J.T."/>
            <person name="Danchin A."/>
            <person name="Wang T.Z."/>
            <person name="Brettin T.S."/>
            <person name="Hauser L.J."/>
            <person name="Land M.L."/>
            <person name="Thompson L.S."/>
        </authorList>
    </citation>
    <scope>NUCLEOTIDE SEQUENCE [LARGE SCALE GENOMIC DNA]</scope>
    <source>
        <strain>DSM 17664 / CCUG 51855 / 37</strain>
    </source>
</reference>
<accession>A1SZ24</accession>
<protein>
    <recommendedName>
        <fullName evidence="1">UPF0246 protein Ping_3037</fullName>
    </recommendedName>
</protein>
<sequence length="257" mass="28940">MLVVLSPAKTLDVETPAPVTAFSQADLLDDSQLLINRCNQLSMQDIASLMKVSDKIAGLNVARFSQWHRPFVLNNAKQALFAFQGDVYTGLQAESLSLEAINYAQMHLRILSGLYGLLRPLDLMQAYRLEMGTKLENVRGANLYQFWGSLITQRLNKALAAQGDNLLINLASNEYFKAVKIKELNGLIITPVFKDQKNGQYKVISFYAKKARGLMTRYIIEQQVTALDKLKEFDSAGYYFVESASSATELVFYRDEM</sequence>
<evidence type="ECO:0000255" key="1">
    <source>
        <dbReference type="HAMAP-Rule" id="MF_00652"/>
    </source>
</evidence>
<dbReference type="EMBL" id="CP000510">
    <property type="protein sequence ID" value="ABM04739.1"/>
    <property type="molecule type" value="Genomic_DNA"/>
</dbReference>
<dbReference type="RefSeq" id="WP_011771293.1">
    <property type="nucleotide sequence ID" value="NC_008709.1"/>
</dbReference>
<dbReference type="SMR" id="A1SZ24"/>
<dbReference type="STRING" id="357804.Ping_3037"/>
<dbReference type="KEGG" id="pin:Ping_3037"/>
<dbReference type="eggNOG" id="COG3022">
    <property type="taxonomic scope" value="Bacteria"/>
</dbReference>
<dbReference type="HOGENOM" id="CLU_061989_0_0_6"/>
<dbReference type="OrthoDB" id="9777133at2"/>
<dbReference type="Proteomes" id="UP000000639">
    <property type="component" value="Chromosome"/>
</dbReference>
<dbReference type="GO" id="GO:0005829">
    <property type="term" value="C:cytosol"/>
    <property type="evidence" value="ECO:0007669"/>
    <property type="project" value="TreeGrafter"/>
</dbReference>
<dbReference type="GO" id="GO:0033194">
    <property type="term" value="P:response to hydroperoxide"/>
    <property type="evidence" value="ECO:0007669"/>
    <property type="project" value="TreeGrafter"/>
</dbReference>
<dbReference type="HAMAP" id="MF_00652">
    <property type="entry name" value="UPF0246"/>
    <property type="match status" value="1"/>
</dbReference>
<dbReference type="InterPro" id="IPR005583">
    <property type="entry name" value="YaaA"/>
</dbReference>
<dbReference type="NCBIfam" id="NF002541">
    <property type="entry name" value="PRK02101.1-1"/>
    <property type="match status" value="1"/>
</dbReference>
<dbReference type="NCBIfam" id="NF002542">
    <property type="entry name" value="PRK02101.1-3"/>
    <property type="match status" value="1"/>
</dbReference>
<dbReference type="PANTHER" id="PTHR30283:SF4">
    <property type="entry name" value="PEROXIDE STRESS RESISTANCE PROTEIN YAAA"/>
    <property type="match status" value="1"/>
</dbReference>
<dbReference type="PANTHER" id="PTHR30283">
    <property type="entry name" value="PEROXIDE STRESS RESPONSE PROTEIN YAAA"/>
    <property type="match status" value="1"/>
</dbReference>
<dbReference type="Pfam" id="PF03883">
    <property type="entry name" value="H2O2_YaaD"/>
    <property type="match status" value="1"/>
</dbReference>
<keyword id="KW-1185">Reference proteome</keyword>